<keyword id="KW-0687">Ribonucleoprotein</keyword>
<keyword id="KW-0689">Ribosomal protein</keyword>
<keyword id="KW-0694">RNA-binding</keyword>
<keyword id="KW-0699">rRNA-binding</keyword>
<gene>
    <name evidence="1" type="primary">rpsH</name>
    <name type="ordered locus">Bcen_2745</name>
</gene>
<protein>
    <recommendedName>
        <fullName evidence="1">Small ribosomal subunit protein uS8</fullName>
    </recommendedName>
    <alternativeName>
        <fullName evidence="2">30S ribosomal protein S8</fullName>
    </alternativeName>
</protein>
<comment type="function">
    <text evidence="1">One of the primary rRNA binding proteins, it binds directly to 16S rRNA central domain where it helps coordinate assembly of the platform of the 30S subunit.</text>
</comment>
<comment type="subunit">
    <text evidence="1">Part of the 30S ribosomal subunit. Contacts proteins S5 and S12.</text>
</comment>
<comment type="similarity">
    <text evidence="1">Belongs to the universal ribosomal protein uS8 family.</text>
</comment>
<proteinExistence type="inferred from homology"/>
<organism>
    <name type="scientific">Burkholderia orbicola (strain AU 1054)</name>
    <dbReference type="NCBI Taxonomy" id="331271"/>
    <lineage>
        <taxon>Bacteria</taxon>
        <taxon>Pseudomonadati</taxon>
        <taxon>Pseudomonadota</taxon>
        <taxon>Betaproteobacteria</taxon>
        <taxon>Burkholderiales</taxon>
        <taxon>Burkholderiaceae</taxon>
        <taxon>Burkholderia</taxon>
        <taxon>Burkholderia cepacia complex</taxon>
        <taxon>Burkholderia orbicola</taxon>
    </lineage>
</organism>
<name>RS8_BURO1</name>
<accession>Q1BRW2</accession>
<evidence type="ECO:0000255" key="1">
    <source>
        <dbReference type="HAMAP-Rule" id="MF_01302"/>
    </source>
</evidence>
<evidence type="ECO:0000305" key="2"/>
<dbReference type="EMBL" id="CP000378">
    <property type="protein sequence ID" value="ABF77643.1"/>
    <property type="molecule type" value="Genomic_DNA"/>
</dbReference>
<dbReference type="SMR" id="Q1BRW2"/>
<dbReference type="HOGENOM" id="CLU_098428_0_0_4"/>
<dbReference type="GO" id="GO:1990904">
    <property type="term" value="C:ribonucleoprotein complex"/>
    <property type="evidence" value="ECO:0007669"/>
    <property type="project" value="UniProtKB-KW"/>
</dbReference>
<dbReference type="GO" id="GO:0005840">
    <property type="term" value="C:ribosome"/>
    <property type="evidence" value="ECO:0007669"/>
    <property type="project" value="UniProtKB-KW"/>
</dbReference>
<dbReference type="GO" id="GO:0019843">
    <property type="term" value="F:rRNA binding"/>
    <property type="evidence" value="ECO:0007669"/>
    <property type="project" value="UniProtKB-UniRule"/>
</dbReference>
<dbReference type="GO" id="GO:0003735">
    <property type="term" value="F:structural constituent of ribosome"/>
    <property type="evidence" value="ECO:0007669"/>
    <property type="project" value="InterPro"/>
</dbReference>
<dbReference type="GO" id="GO:0006412">
    <property type="term" value="P:translation"/>
    <property type="evidence" value="ECO:0007669"/>
    <property type="project" value="UniProtKB-UniRule"/>
</dbReference>
<dbReference type="FunFam" id="3.30.1370.30:FF:000003">
    <property type="entry name" value="30S ribosomal protein S8"/>
    <property type="match status" value="1"/>
</dbReference>
<dbReference type="FunFam" id="3.30.1490.10:FF:000001">
    <property type="entry name" value="30S ribosomal protein S8"/>
    <property type="match status" value="1"/>
</dbReference>
<dbReference type="Gene3D" id="3.30.1370.30">
    <property type="match status" value="1"/>
</dbReference>
<dbReference type="Gene3D" id="3.30.1490.10">
    <property type="match status" value="1"/>
</dbReference>
<dbReference type="HAMAP" id="MF_01302_B">
    <property type="entry name" value="Ribosomal_uS8_B"/>
    <property type="match status" value="1"/>
</dbReference>
<dbReference type="InterPro" id="IPR000630">
    <property type="entry name" value="Ribosomal_uS8"/>
</dbReference>
<dbReference type="InterPro" id="IPR047863">
    <property type="entry name" value="Ribosomal_uS8_CS"/>
</dbReference>
<dbReference type="InterPro" id="IPR035987">
    <property type="entry name" value="Ribosomal_uS8_sf"/>
</dbReference>
<dbReference type="NCBIfam" id="NF001109">
    <property type="entry name" value="PRK00136.1"/>
    <property type="match status" value="1"/>
</dbReference>
<dbReference type="PANTHER" id="PTHR11758">
    <property type="entry name" value="40S RIBOSOMAL PROTEIN S15A"/>
    <property type="match status" value="1"/>
</dbReference>
<dbReference type="Pfam" id="PF00410">
    <property type="entry name" value="Ribosomal_S8"/>
    <property type="match status" value="1"/>
</dbReference>
<dbReference type="SUPFAM" id="SSF56047">
    <property type="entry name" value="Ribosomal protein S8"/>
    <property type="match status" value="1"/>
</dbReference>
<dbReference type="PROSITE" id="PS00053">
    <property type="entry name" value="RIBOSOMAL_S8"/>
    <property type="match status" value="1"/>
</dbReference>
<feature type="chain" id="PRO_0000290811" description="Small ribosomal subunit protein uS8">
    <location>
        <begin position="1"/>
        <end position="131"/>
    </location>
</feature>
<sequence length="131" mass="14199">MSMSDPIADMLTRIRNAQMVEKVSVAMPSSKVKVAIAQVLKDEGYIDDFAVKAEGAKSELNIALKYYAGRPVIERLERVSKPGLRVYRGRNDIPQVMNGLGVAIVSTPKGVMTDRKARATGVGGEVICYVA</sequence>
<reference key="1">
    <citation type="submission" date="2006-05" db="EMBL/GenBank/DDBJ databases">
        <title>Complete sequence of chromosome 1 of Burkholderia cenocepacia AU 1054.</title>
        <authorList>
            <consortium name="US DOE Joint Genome Institute"/>
            <person name="Copeland A."/>
            <person name="Lucas S."/>
            <person name="Lapidus A."/>
            <person name="Barry K."/>
            <person name="Detter J.C."/>
            <person name="Glavina del Rio T."/>
            <person name="Hammon N."/>
            <person name="Israni S."/>
            <person name="Dalin E."/>
            <person name="Tice H."/>
            <person name="Pitluck S."/>
            <person name="Chain P."/>
            <person name="Malfatti S."/>
            <person name="Shin M."/>
            <person name="Vergez L."/>
            <person name="Schmutz J."/>
            <person name="Larimer F."/>
            <person name="Land M."/>
            <person name="Hauser L."/>
            <person name="Kyrpides N."/>
            <person name="Lykidis A."/>
            <person name="LiPuma J.J."/>
            <person name="Konstantinidis K."/>
            <person name="Tiedje J.M."/>
            <person name="Richardson P."/>
        </authorList>
    </citation>
    <scope>NUCLEOTIDE SEQUENCE [LARGE SCALE GENOMIC DNA]</scope>
    <source>
        <strain>AU 1054</strain>
    </source>
</reference>